<keyword id="KW-1003">Cell membrane</keyword>
<keyword id="KW-0472">Membrane</keyword>
<keyword id="KW-1185">Reference proteome</keyword>
<keyword id="KW-0812">Transmembrane</keyword>
<keyword id="KW-1133">Transmembrane helix</keyword>
<protein>
    <recommendedName>
        <fullName evidence="1">PPE family protein PPE4</fullName>
    </recommendedName>
</protein>
<evidence type="ECO:0000250" key="1">
    <source>
        <dbReference type="UniProtKB" id="P9WI43"/>
    </source>
</evidence>
<evidence type="ECO:0000255" key="2"/>
<evidence type="ECO:0000256" key="3">
    <source>
        <dbReference type="SAM" id="MobiDB-lite"/>
    </source>
</evidence>
<evidence type="ECO:0000305" key="4"/>
<proteinExistence type="inferred from homology"/>
<feature type="chain" id="PRO_0000428072" description="PPE family protein PPE4">
    <location>
        <begin position="1"/>
        <end position="513"/>
    </location>
</feature>
<feature type="transmembrane region" description="Helical" evidence="2">
    <location>
        <begin position="233"/>
        <end position="253"/>
    </location>
</feature>
<feature type="transmembrane region" description="Helical" evidence="2">
    <location>
        <begin position="277"/>
        <end position="297"/>
    </location>
</feature>
<feature type="transmembrane region" description="Helical" evidence="2">
    <location>
        <begin position="309"/>
        <end position="329"/>
    </location>
</feature>
<feature type="region of interest" description="Disordered" evidence="3">
    <location>
        <begin position="395"/>
        <end position="446"/>
    </location>
</feature>
<feature type="region of interest" description="Disordered" evidence="3">
    <location>
        <begin position="469"/>
        <end position="513"/>
    </location>
</feature>
<comment type="function">
    <text evidence="1">Important for the siderophore-mediated iron-acquisition function of ESX-3.</text>
</comment>
<comment type="subcellular location">
    <subcellularLocation>
        <location evidence="4">Cell membrane</location>
        <topology evidence="2">Multi-pass membrane protein</topology>
    </subcellularLocation>
</comment>
<comment type="similarity">
    <text evidence="4">Belongs to the mycobacterial PPE family.</text>
</comment>
<gene>
    <name type="primary">PPE4</name>
    <name type="ordered locus">MT0299</name>
</gene>
<sequence>MAAPIWMASPPEVHSALLSNGPGPGSLVAAATAWSQLSAEYASTAAELSGLLGAVPGWAWQGPSAEWYVAAHLPYVAWLTQASADAAGAAAQHEAAAAAYTTALAAMPTLAELAANHVIHTVLVATNFFGINTIPITLNEADYVRMWLQAAAVMGLYQAASGAALASAPRTVPAPTVMNPGGGAASTVGAVNPWQWLLALLQQLWNAYTGFYGWMLQLIWQFLQDPIGNSIKIIIAFLTNPIQALITYGPLLFALGYQIFFNLVGWPTWGMILSSPFLLPAGLGLGLAAIAFLPIVLAPAVIPPASTPLAAAAVAAGSVWPAVSMAVTGAGTAGAATPAAGAAPSAGAAPAPAAPATASFAYAVGGSGDWGPSLGPTVGGRGGIKAPAATVPAAAAAAATRGQSRARRRRRSELRDYGDEFLDMDSDSGFGPSTGDHGAQASERGAGTLGFAGTATKERRVRAVGLTALAGDEFGNGPRMPMVPGTWEQGSNEPEAPDGSGRGGGDGLPHDSK</sequence>
<accession>P9WI42</accession>
<accession>L0T372</accession>
<accession>Q6MX52</accession>
<accession>Q7DA35</accession>
<reference key="1">
    <citation type="journal article" date="2002" name="J. Bacteriol.">
        <title>Whole-genome comparison of Mycobacterium tuberculosis clinical and laboratory strains.</title>
        <authorList>
            <person name="Fleischmann R.D."/>
            <person name="Alland D."/>
            <person name="Eisen J.A."/>
            <person name="Carpenter L."/>
            <person name="White O."/>
            <person name="Peterson J.D."/>
            <person name="DeBoy R.T."/>
            <person name="Dodson R.J."/>
            <person name="Gwinn M.L."/>
            <person name="Haft D.H."/>
            <person name="Hickey E.K."/>
            <person name="Kolonay J.F."/>
            <person name="Nelson W.C."/>
            <person name="Umayam L.A."/>
            <person name="Ermolaeva M.D."/>
            <person name="Salzberg S.L."/>
            <person name="Delcher A."/>
            <person name="Utterback T.R."/>
            <person name="Weidman J.F."/>
            <person name="Khouri H.M."/>
            <person name="Gill J."/>
            <person name="Mikula A."/>
            <person name="Bishai W."/>
            <person name="Jacobs W.R. Jr."/>
            <person name="Venter J.C."/>
            <person name="Fraser C.M."/>
        </authorList>
    </citation>
    <scope>NUCLEOTIDE SEQUENCE [LARGE SCALE GENOMIC DNA]</scope>
    <source>
        <strain>CDC 1551 / Oshkosh</strain>
    </source>
</reference>
<name>PPE04_MYCTO</name>
<dbReference type="EMBL" id="AE000516">
    <property type="protein sequence ID" value="AAK44523.1"/>
    <property type="molecule type" value="Genomic_DNA"/>
</dbReference>
<dbReference type="PIR" id="D70836">
    <property type="entry name" value="D70836"/>
</dbReference>
<dbReference type="RefSeq" id="WP_003401488.1">
    <property type="nucleotide sequence ID" value="NZ_KK341227.1"/>
</dbReference>
<dbReference type="SMR" id="P9WI42"/>
<dbReference type="KEGG" id="mtc:MT0299"/>
<dbReference type="PATRIC" id="fig|83331.31.peg.322"/>
<dbReference type="HOGENOM" id="CLU_000243_5_2_11"/>
<dbReference type="Proteomes" id="UP000001020">
    <property type="component" value="Chromosome"/>
</dbReference>
<dbReference type="GO" id="GO:0005886">
    <property type="term" value="C:plasma membrane"/>
    <property type="evidence" value="ECO:0007669"/>
    <property type="project" value="UniProtKB-SubCell"/>
</dbReference>
<dbReference type="GO" id="GO:0052572">
    <property type="term" value="P:response to host immune response"/>
    <property type="evidence" value="ECO:0007669"/>
    <property type="project" value="TreeGrafter"/>
</dbReference>
<dbReference type="FunFam" id="1.20.1260.20:FF:000001">
    <property type="entry name" value="PPE family protein PPE41"/>
    <property type="match status" value="1"/>
</dbReference>
<dbReference type="Gene3D" id="1.20.1260.20">
    <property type="entry name" value="PPE superfamily"/>
    <property type="match status" value="1"/>
</dbReference>
<dbReference type="InterPro" id="IPR043641">
    <property type="entry name" value="PPE-PPW_C"/>
</dbReference>
<dbReference type="InterPro" id="IPR000030">
    <property type="entry name" value="PPE_dom"/>
</dbReference>
<dbReference type="InterPro" id="IPR038332">
    <property type="entry name" value="PPE_sf"/>
</dbReference>
<dbReference type="PANTHER" id="PTHR46766">
    <property type="entry name" value="GLUTAMINE-RICH PROTEIN 2"/>
    <property type="match status" value="1"/>
</dbReference>
<dbReference type="PANTHER" id="PTHR46766:SF1">
    <property type="entry name" value="GLUTAMINE-RICH PROTEIN 2"/>
    <property type="match status" value="1"/>
</dbReference>
<dbReference type="Pfam" id="PF00823">
    <property type="entry name" value="PPE"/>
    <property type="match status" value="1"/>
</dbReference>
<dbReference type="Pfam" id="PF18878">
    <property type="entry name" value="PPE-PPW"/>
    <property type="match status" value="1"/>
</dbReference>
<dbReference type="SUPFAM" id="SSF140459">
    <property type="entry name" value="PE/PPE dimer-like"/>
    <property type="match status" value="1"/>
</dbReference>
<organism>
    <name type="scientific">Mycobacterium tuberculosis (strain CDC 1551 / Oshkosh)</name>
    <dbReference type="NCBI Taxonomy" id="83331"/>
    <lineage>
        <taxon>Bacteria</taxon>
        <taxon>Bacillati</taxon>
        <taxon>Actinomycetota</taxon>
        <taxon>Actinomycetes</taxon>
        <taxon>Mycobacteriales</taxon>
        <taxon>Mycobacteriaceae</taxon>
        <taxon>Mycobacterium</taxon>
        <taxon>Mycobacterium tuberculosis complex</taxon>
    </lineage>
</organism>